<gene>
    <name evidence="1" type="primary">mgsA</name>
    <name type="ordered locus">lwe1925</name>
</gene>
<dbReference type="EC" id="4.2.3.3" evidence="1"/>
<dbReference type="EMBL" id="AM263198">
    <property type="protein sequence ID" value="CAK21343.1"/>
    <property type="molecule type" value="Genomic_DNA"/>
</dbReference>
<dbReference type="RefSeq" id="WP_011702691.1">
    <property type="nucleotide sequence ID" value="NC_008555.1"/>
</dbReference>
<dbReference type="SMR" id="A0AK11"/>
<dbReference type="STRING" id="386043.lwe1925"/>
<dbReference type="GeneID" id="61189827"/>
<dbReference type="KEGG" id="lwe:lwe1925"/>
<dbReference type="eggNOG" id="COG1803">
    <property type="taxonomic scope" value="Bacteria"/>
</dbReference>
<dbReference type="HOGENOM" id="CLU_120420_1_0_9"/>
<dbReference type="OrthoDB" id="9787147at2"/>
<dbReference type="Proteomes" id="UP000000779">
    <property type="component" value="Chromosome"/>
</dbReference>
<dbReference type="GO" id="GO:0005829">
    <property type="term" value="C:cytosol"/>
    <property type="evidence" value="ECO:0007669"/>
    <property type="project" value="TreeGrafter"/>
</dbReference>
<dbReference type="GO" id="GO:0008929">
    <property type="term" value="F:methylglyoxal synthase activity"/>
    <property type="evidence" value="ECO:0007669"/>
    <property type="project" value="UniProtKB-UniRule"/>
</dbReference>
<dbReference type="GO" id="GO:0019242">
    <property type="term" value="P:methylglyoxal biosynthetic process"/>
    <property type="evidence" value="ECO:0007669"/>
    <property type="project" value="UniProtKB-UniRule"/>
</dbReference>
<dbReference type="CDD" id="cd01422">
    <property type="entry name" value="MGS"/>
    <property type="match status" value="1"/>
</dbReference>
<dbReference type="FunFam" id="3.40.50.1380:FF:000006">
    <property type="entry name" value="Methylglyoxal synthase"/>
    <property type="match status" value="1"/>
</dbReference>
<dbReference type="Gene3D" id="3.40.50.1380">
    <property type="entry name" value="Methylglyoxal synthase-like domain"/>
    <property type="match status" value="1"/>
</dbReference>
<dbReference type="HAMAP" id="MF_00549">
    <property type="entry name" value="Methylglyoxal_synth"/>
    <property type="match status" value="1"/>
</dbReference>
<dbReference type="InterPro" id="IPR004363">
    <property type="entry name" value="Methylgl_synth"/>
</dbReference>
<dbReference type="InterPro" id="IPR018148">
    <property type="entry name" value="Methylglyoxal_synth_AS"/>
</dbReference>
<dbReference type="InterPro" id="IPR011607">
    <property type="entry name" value="MGS-like_dom"/>
</dbReference>
<dbReference type="InterPro" id="IPR036914">
    <property type="entry name" value="MGS-like_dom_sf"/>
</dbReference>
<dbReference type="NCBIfam" id="TIGR00160">
    <property type="entry name" value="MGSA"/>
    <property type="match status" value="1"/>
</dbReference>
<dbReference type="NCBIfam" id="NF003559">
    <property type="entry name" value="PRK05234.1"/>
    <property type="match status" value="1"/>
</dbReference>
<dbReference type="PANTHER" id="PTHR30492">
    <property type="entry name" value="METHYLGLYOXAL SYNTHASE"/>
    <property type="match status" value="1"/>
</dbReference>
<dbReference type="PANTHER" id="PTHR30492:SF0">
    <property type="entry name" value="METHYLGLYOXAL SYNTHASE"/>
    <property type="match status" value="1"/>
</dbReference>
<dbReference type="Pfam" id="PF02142">
    <property type="entry name" value="MGS"/>
    <property type="match status" value="1"/>
</dbReference>
<dbReference type="PIRSF" id="PIRSF006614">
    <property type="entry name" value="Methylglyox_syn"/>
    <property type="match status" value="1"/>
</dbReference>
<dbReference type="SMART" id="SM00851">
    <property type="entry name" value="MGS"/>
    <property type="match status" value="1"/>
</dbReference>
<dbReference type="SUPFAM" id="SSF52335">
    <property type="entry name" value="Methylglyoxal synthase-like"/>
    <property type="match status" value="1"/>
</dbReference>
<dbReference type="PROSITE" id="PS01335">
    <property type="entry name" value="METHYLGLYOXAL_SYNTH"/>
    <property type="match status" value="1"/>
</dbReference>
<dbReference type="PROSITE" id="PS51855">
    <property type="entry name" value="MGS"/>
    <property type="match status" value="1"/>
</dbReference>
<comment type="function">
    <text evidence="1">Catalyzes the formation of methylglyoxal from dihydroxyacetone phosphate.</text>
</comment>
<comment type="catalytic activity">
    <reaction evidence="1">
        <text>dihydroxyacetone phosphate = methylglyoxal + phosphate</text>
        <dbReference type="Rhea" id="RHEA:17937"/>
        <dbReference type="ChEBI" id="CHEBI:17158"/>
        <dbReference type="ChEBI" id="CHEBI:43474"/>
        <dbReference type="ChEBI" id="CHEBI:57642"/>
        <dbReference type="EC" id="4.2.3.3"/>
    </reaction>
</comment>
<comment type="similarity">
    <text evidence="1">Belongs to the methylglyoxal synthase family.</text>
</comment>
<feature type="chain" id="PRO_1000017818" description="Methylglyoxal synthase">
    <location>
        <begin position="1"/>
        <end position="134"/>
    </location>
</feature>
<feature type="domain" description="MGS-like" evidence="1">
    <location>
        <begin position="1"/>
        <end position="134"/>
    </location>
</feature>
<feature type="active site" description="Proton donor/acceptor" evidence="1">
    <location>
        <position position="60"/>
    </location>
</feature>
<feature type="binding site" evidence="1">
    <location>
        <position position="8"/>
    </location>
    <ligand>
        <name>substrate</name>
    </ligand>
</feature>
<feature type="binding site" evidence="1">
    <location>
        <position position="12"/>
    </location>
    <ligand>
        <name>substrate</name>
    </ligand>
</feature>
<feature type="binding site" evidence="1">
    <location>
        <begin position="34"/>
        <end position="37"/>
    </location>
    <ligand>
        <name>substrate</name>
    </ligand>
</feature>
<feature type="binding site" evidence="1">
    <location>
        <begin position="54"/>
        <end position="55"/>
    </location>
    <ligand>
        <name>substrate</name>
    </ligand>
</feature>
<feature type="binding site" evidence="1">
    <location>
        <position position="87"/>
    </location>
    <ligand>
        <name>substrate</name>
    </ligand>
</feature>
<reference key="1">
    <citation type="journal article" date="2006" name="J. Bacteriol.">
        <title>Whole-genome sequence of Listeria welshimeri reveals common steps in genome reduction with Listeria innocua as compared to Listeria monocytogenes.</title>
        <authorList>
            <person name="Hain T."/>
            <person name="Steinweg C."/>
            <person name="Kuenne C.T."/>
            <person name="Billion A."/>
            <person name="Ghai R."/>
            <person name="Chatterjee S.S."/>
            <person name="Domann E."/>
            <person name="Kaerst U."/>
            <person name="Goesmann A."/>
            <person name="Bekel T."/>
            <person name="Bartels D."/>
            <person name="Kaiser O."/>
            <person name="Meyer F."/>
            <person name="Puehler A."/>
            <person name="Weisshaar B."/>
            <person name="Wehland J."/>
            <person name="Liang C."/>
            <person name="Dandekar T."/>
            <person name="Lampidis R."/>
            <person name="Kreft J."/>
            <person name="Goebel W."/>
            <person name="Chakraborty T."/>
        </authorList>
    </citation>
    <scope>NUCLEOTIDE SEQUENCE [LARGE SCALE GENOMIC DNA]</scope>
    <source>
        <strain>ATCC 35897 / DSM 20650 / CCUG 15529 / CIP 8149 / NCTC 11857 / SLCC 5334 / V8</strain>
    </source>
</reference>
<keyword id="KW-0456">Lyase</keyword>
<name>MGSA_LISW6</name>
<organism>
    <name type="scientific">Listeria welshimeri serovar 6b (strain ATCC 35897 / DSM 20650 / CCUG 15529 / CIP 8149 / NCTC 11857 / SLCC 5334 / V8)</name>
    <dbReference type="NCBI Taxonomy" id="386043"/>
    <lineage>
        <taxon>Bacteria</taxon>
        <taxon>Bacillati</taxon>
        <taxon>Bacillota</taxon>
        <taxon>Bacilli</taxon>
        <taxon>Bacillales</taxon>
        <taxon>Listeriaceae</taxon>
        <taxon>Listeria</taxon>
    </lineage>
</organism>
<protein>
    <recommendedName>
        <fullName evidence="1">Methylglyoxal synthase</fullName>
        <shortName evidence="1">MGS</shortName>
        <ecNumber evidence="1">4.2.3.3</ecNumber>
    </recommendedName>
</protein>
<proteinExistence type="inferred from homology"/>
<accession>A0AK11</accession>
<sequence>MHIALIAHDEKKDLMEEFAIAYKHLLEPHQLYATGTTGLRIIEATGLSVHRFKSGPLGGDQQIGARISENKMDLVIFLRDPLTAQPHEPDVTALIRLCDVYEIPLATNIGTAEILIRGLESGFLDWRDLRRNDE</sequence>
<evidence type="ECO:0000255" key="1">
    <source>
        <dbReference type="HAMAP-Rule" id="MF_00549"/>
    </source>
</evidence>